<name>RNB_YERE8</name>
<feature type="chain" id="PRO_1000063903" description="Exoribonuclease 2">
    <location>
        <begin position="1"/>
        <end position="644"/>
    </location>
</feature>
<feature type="domain" description="RNB" evidence="1">
    <location>
        <begin position="189"/>
        <end position="516"/>
    </location>
</feature>
<feature type="domain" description="S1 motif" evidence="2">
    <location>
        <begin position="561"/>
        <end position="643"/>
    </location>
</feature>
<comment type="function">
    <text evidence="2">Involved in mRNA degradation. Hydrolyzes single-stranded polyribonucleotides processively in the 3' to 5' direction.</text>
</comment>
<comment type="catalytic activity">
    <reaction evidence="2">
        <text>Exonucleolytic cleavage in the 3'- to 5'-direction to yield nucleoside 5'-phosphates.</text>
        <dbReference type="EC" id="3.1.13.1"/>
    </reaction>
</comment>
<comment type="subcellular location">
    <subcellularLocation>
        <location evidence="2">Cytoplasm</location>
    </subcellularLocation>
</comment>
<comment type="similarity">
    <text evidence="2">Belongs to the RNR ribonuclease family. RNase II subfamily.</text>
</comment>
<dbReference type="EC" id="3.1.13.1" evidence="2"/>
<dbReference type="EMBL" id="AM286415">
    <property type="protein sequence ID" value="CAL12061.1"/>
    <property type="molecule type" value="Genomic_DNA"/>
</dbReference>
<dbReference type="RefSeq" id="WP_005169906.1">
    <property type="nucleotide sequence ID" value="NC_008800.1"/>
</dbReference>
<dbReference type="RefSeq" id="YP_001006235.1">
    <property type="nucleotide sequence ID" value="NC_008800.1"/>
</dbReference>
<dbReference type="SMR" id="A1JM34"/>
<dbReference type="KEGG" id="yen:YE1982"/>
<dbReference type="PATRIC" id="fig|393305.7.peg.2143"/>
<dbReference type="eggNOG" id="COG4776">
    <property type="taxonomic scope" value="Bacteria"/>
</dbReference>
<dbReference type="HOGENOM" id="CLU_002333_7_3_6"/>
<dbReference type="OrthoDB" id="9764149at2"/>
<dbReference type="Proteomes" id="UP000000642">
    <property type="component" value="Chromosome"/>
</dbReference>
<dbReference type="GO" id="GO:0005829">
    <property type="term" value="C:cytosol"/>
    <property type="evidence" value="ECO:0007669"/>
    <property type="project" value="UniProtKB-ARBA"/>
</dbReference>
<dbReference type="GO" id="GO:0008859">
    <property type="term" value="F:exoribonuclease II activity"/>
    <property type="evidence" value="ECO:0007669"/>
    <property type="project" value="UniProtKB-UniRule"/>
</dbReference>
<dbReference type="GO" id="GO:0003723">
    <property type="term" value="F:RNA binding"/>
    <property type="evidence" value="ECO:0007669"/>
    <property type="project" value="UniProtKB-KW"/>
</dbReference>
<dbReference type="GO" id="GO:0006402">
    <property type="term" value="P:mRNA catabolic process"/>
    <property type="evidence" value="ECO:0007669"/>
    <property type="project" value="UniProtKB-UniRule"/>
</dbReference>
<dbReference type="FunFam" id="2.40.50.140:FF:000079">
    <property type="entry name" value="Exoribonuclease 2"/>
    <property type="match status" value="1"/>
</dbReference>
<dbReference type="Gene3D" id="2.40.50.640">
    <property type="match status" value="1"/>
</dbReference>
<dbReference type="Gene3D" id="2.40.50.140">
    <property type="entry name" value="Nucleic acid-binding proteins"/>
    <property type="match status" value="2"/>
</dbReference>
<dbReference type="HAMAP" id="MF_01036">
    <property type="entry name" value="RNase_II"/>
    <property type="match status" value="1"/>
</dbReference>
<dbReference type="InterPro" id="IPR011129">
    <property type="entry name" value="CSD"/>
</dbReference>
<dbReference type="InterPro" id="IPR012340">
    <property type="entry name" value="NA-bd_OB-fold"/>
</dbReference>
<dbReference type="InterPro" id="IPR013223">
    <property type="entry name" value="RNase_B_OB_dom"/>
</dbReference>
<dbReference type="InterPro" id="IPR011804">
    <property type="entry name" value="RNase_II"/>
</dbReference>
<dbReference type="InterPro" id="IPR001900">
    <property type="entry name" value="RNase_II/R"/>
</dbReference>
<dbReference type="InterPro" id="IPR022966">
    <property type="entry name" value="RNase_II/R_CS"/>
</dbReference>
<dbReference type="InterPro" id="IPR004476">
    <property type="entry name" value="RNase_II/RNase_R"/>
</dbReference>
<dbReference type="InterPro" id="IPR050180">
    <property type="entry name" value="RNR_Ribonuclease"/>
</dbReference>
<dbReference type="InterPro" id="IPR003029">
    <property type="entry name" value="S1_domain"/>
</dbReference>
<dbReference type="NCBIfam" id="TIGR00358">
    <property type="entry name" value="3_prime_RNase"/>
    <property type="match status" value="1"/>
</dbReference>
<dbReference type="NCBIfam" id="NF003455">
    <property type="entry name" value="PRK05054.1"/>
    <property type="match status" value="1"/>
</dbReference>
<dbReference type="NCBIfam" id="TIGR02062">
    <property type="entry name" value="RNase_B"/>
    <property type="match status" value="1"/>
</dbReference>
<dbReference type="PANTHER" id="PTHR23355:SF37">
    <property type="entry name" value="EXORIBONUCLEASE 2"/>
    <property type="match status" value="1"/>
</dbReference>
<dbReference type="PANTHER" id="PTHR23355">
    <property type="entry name" value="RIBONUCLEASE"/>
    <property type="match status" value="1"/>
</dbReference>
<dbReference type="Pfam" id="PF08206">
    <property type="entry name" value="OB_RNB"/>
    <property type="match status" value="1"/>
</dbReference>
<dbReference type="Pfam" id="PF00773">
    <property type="entry name" value="RNB"/>
    <property type="match status" value="1"/>
</dbReference>
<dbReference type="Pfam" id="PF00575">
    <property type="entry name" value="S1"/>
    <property type="match status" value="1"/>
</dbReference>
<dbReference type="SMART" id="SM00357">
    <property type="entry name" value="CSP"/>
    <property type="match status" value="1"/>
</dbReference>
<dbReference type="SMART" id="SM00955">
    <property type="entry name" value="RNB"/>
    <property type="match status" value="1"/>
</dbReference>
<dbReference type="SUPFAM" id="SSF50249">
    <property type="entry name" value="Nucleic acid-binding proteins"/>
    <property type="match status" value="4"/>
</dbReference>
<dbReference type="PROSITE" id="PS01175">
    <property type="entry name" value="RIBONUCLEASE_II"/>
    <property type="match status" value="1"/>
</dbReference>
<gene>
    <name evidence="2" type="primary">rnb</name>
    <name type="ordered locus">YE1982</name>
</gene>
<keyword id="KW-0963">Cytoplasm</keyword>
<keyword id="KW-0269">Exonuclease</keyword>
<keyword id="KW-0378">Hydrolase</keyword>
<keyword id="KW-0540">Nuclease</keyword>
<keyword id="KW-0694">RNA-binding</keyword>
<organism>
    <name type="scientific">Yersinia enterocolitica serotype O:8 / biotype 1B (strain NCTC 13174 / 8081)</name>
    <dbReference type="NCBI Taxonomy" id="393305"/>
    <lineage>
        <taxon>Bacteria</taxon>
        <taxon>Pseudomonadati</taxon>
        <taxon>Pseudomonadota</taxon>
        <taxon>Gammaproteobacteria</taxon>
        <taxon>Enterobacterales</taxon>
        <taxon>Yersiniaceae</taxon>
        <taxon>Yersinia</taxon>
    </lineage>
</organism>
<sequence length="644" mass="72724">MFQDNPLLAQLKQQLHTQTPRVEGVVKGTEKGFGFLEVDGQKSYFIPPPQMKKVMHGDRIIATLHTDKDREIAEPETLVEPFLSRFVGRVQRKDDRLSIVPDHPLLRDAIQCRPVRELTHDFQSGDWAVAEMRRHPLKGDRGFNADLTAFITDGEDHFVPWWVTLARHNLEREAPVMVESALHDANLQREDLTALNFVTIDSASTEDMDDALQVQDNGDGSLLLTIAIADPTAYVDENSELDLIARKRAFTNYLPGFNIPMLPRDLSDNLCSLRPNERRPVLVCRVTIAADGTLGEDIHFSAAWVESKAKLVYDEVSDWLEGSGDWQPQNADIAEQITLLKRVCEARSHWREQHALVFKDRPDYRFLLGEKGEVLDIIVEHRRIANRIVEECMIAANVCAAIALRDNLGFGIYNVHTGFDPALVEQAANVLQANGVEADPQALLTLPGFCELRRHLDALPTQFLDSRIRRFQTFAEISTVPGPHFGLGLEAYATWTSPIRKYGDMVNHRLLKAIITGQQAEKPQDEITVQLAERRRLNRMAERDVGDWLYARYLQPMAGTDTRFPAEIIDVTRGGLRVRLLDNGAVAFIPAPFIHAVRDEMVCSQETGTVQIKGETVYSQSDKIEVRIAEVRMETRNVVARPVV</sequence>
<protein>
    <recommendedName>
        <fullName evidence="2">Exoribonuclease 2</fullName>
        <ecNumber evidence="2">3.1.13.1</ecNumber>
    </recommendedName>
    <alternativeName>
        <fullName evidence="2">Exoribonuclease II</fullName>
        <shortName evidence="2">RNase II</shortName>
        <shortName evidence="2">Ribonuclease II</shortName>
    </alternativeName>
</protein>
<reference key="1">
    <citation type="journal article" date="2006" name="PLoS Genet.">
        <title>The complete genome sequence and comparative genome analysis of the high pathogenicity Yersinia enterocolitica strain 8081.</title>
        <authorList>
            <person name="Thomson N.R."/>
            <person name="Howard S."/>
            <person name="Wren B.W."/>
            <person name="Holden M.T.G."/>
            <person name="Crossman L."/>
            <person name="Challis G.L."/>
            <person name="Churcher C."/>
            <person name="Mungall K."/>
            <person name="Brooks K."/>
            <person name="Chillingworth T."/>
            <person name="Feltwell T."/>
            <person name="Abdellah Z."/>
            <person name="Hauser H."/>
            <person name="Jagels K."/>
            <person name="Maddison M."/>
            <person name="Moule S."/>
            <person name="Sanders M."/>
            <person name="Whitehead S."/>
            <person name="Quail M.A."/>
            <person name="Dougan G."/>
            <person name="Parkhill J."/>
            <person name="Prentice M.B."/>
        </authorList>
    </citation>
    <scope>NUCLEOTIDE SEQUENCE [LARGE SCALE GENOMIC DNA]</scope>
    <source>
        <strain>NCTC 13174 / 8081</strain>
    </source>
</reference>
<proteinExistence type="inferred from homology"/>
<evidence type="ECO:0000255" key="1"/>
<evidence type="ECO:0000255" key="2">
    <source>
        <dbReference type="HAMAP-Rule" id="MF_01036"/>
    </source>
</evidence>
<accession>A1JM34</accession>